<name>ST_POVK3</name>
<evidence type="ECO:0000250" key="1">
    <source>
        <dbReference type="UniProtKB" id="P03081"/>
    </source>
</evidence>
<reference key="1">
    <citation type="journal article" date="2007" name="J. Virol.">
        <title>Identification of a third human polyomavirus.</title>
        <authorList>
            <person name="Allander T."/>
            <person name="Andreasson K."/>
            <person name="Gupta S."/>
            <person name="Bjerkner A."/>
            <person name="Bogdanovic G."/>
            <person name="Persson M.A."/>
            <person name="Dalianis T."/>
            <person name="Ramqvist T."/>
            <person name="Andersson B."/>
        </authorList>
    </citation>
    <scope>NUCLEOTIDE SEQUENCE [GENOMIC DNA]</scope>
</reference>
<protein>
    <recommendedName>
        <fullName>Small t antigen</fullName>
        <shortName>ST</shortName>
        <shortName>ST-AG</shortName>
    </recommendedName>
</protein>
<proteinExistence type="inferred from homology"/>
<organism>
    <name type="scientific">KI polyomavirus (isolate Stockholm 380)</name>
    <name type="common">KIPyV</name>
    <dbReference type="NCBI Taxonomy" id="423448"/>
    <lineage>
        <taxon>Viruses</taxon>
        <taxon>Monodnaviria</taxon>
        <taxon>Shotokuvirae</taxon>
        <taxon>Cossaviricota</taxon>
        <taxon>Papovaviricetes</taxon>
        <taxon>Sepolyvirales</taxon>
        <taxon>Polyomaviridae</taxon>
        <taxon>Betapolyomavirus</taxon>
        <taxon>Betapolyomavirus tertihominis</taxon>
    </lineage>
</organism>
<sequence length="191" mass="23179">MDKTLSREEAKQLMQLLCLDMSCWGNLPLMRRQYLVKCKEYHPDKGGNEESMKLLNSLYLKLQDSVSSVHDLNEEEDNIWQSSQVYCKDLCCNKFRLVGAIYGDYYEAYIMKQWDVCIHGYNHECQCIHCILSKYHKEKYKIYRKPPVWIECYCYKCYREWFFFPISMQTFFFWKVIIFNTEIRAVQPLLR</sequence>
<keyword id="KW-0007">Acetylation</keyword>
<keyword id="KW-0010">Activator</keyword>
<keyword id="KW-0025">Alternative splicing</keyword>
<keyword id="KW-0244">Early protein</keyword>
<keyword id="KW-1035">Host cytoplasm</keyword>
<keyword id="KW-1048">Host nucleus</keyword>
<keyword id="KW-0945">Host-virus interaction</keyword>
<keyword id="KW-0479">Metal-binding</keyword>
<keyword id="KW-0553">Oncogene</keyword>
<keyword id="KW-0597">Phosphoprotein</keyword>
<keyword id="KW-0804">Transcription</keyword>
<keyword id="KW-0805">Transcription regulation</keyword>
<keyword id="KW-0862">Zinc</keyword>
<keyword id="KW-0863">Zinc-finger</keyword>
<feature type="chain" id="PRO_0000442717" description="Small t antigen">
    <location>
        <begin position="1"/>
        <end position="191"/>
    </location>
</feature>
<feature type="domain" description="J">
    <location>
        <begin position="12"/>
        <end position="80"/>
    </location>
</feature>
<feature type="zinc finger region" description="C4-type; atypical">
    <location>
        <begin position="117"/>
        <end position="130"/>
    </location>
</feature>
<feature type="zinc finger region" description="H1C3-type; atypical">
    <location>
        <begin position="136"/>
        <end position="157"/>
    </location>
</feature>
<feature type="modified residue" description="N-acetylmethionine; by host" evidence="1">
    <location>
        <position position="1"/>
    </location>
</feature>
<dbReference type="EMBL" id="EF127908">
    <property type="protein sequence ID" value="ABN09930.1"/>
    <property type="molecule type" value="Genomic_DNA"/>
</dbReference>
<dbReference type="SMR" id="P0DOJ0"/>
<dbReference type="Proteomes" id="UP000166765">
    <property type="component" value="Genome"/>
</dbReference>
<dbReference type="GO" id="GO:0030430">
    <property type="term" value="C:host cell cytoplasm"/>
    <property type="evidence" value="ECO:0007669"/>
    <property type="project" value="UniProtKB-SubCell"/>
</dbReference>
<dbReference type="GO" id="GO:0042025">
    <property type="term" value="C:host cell nucleus"/>
    <property type="evidence" value="ECO:0007669"/>
    <property type="project" value="UniProtKB-SubCell"/>
</dbReference>
<dbReference type="GO" id="GO:0008270">
    <property type="term" value="F:zinc ion binding"/>
    <property type="evidence" value="ECO:0007669"/>
    <property type="project" value="UniProtKB-KW"/>
</dbReference>
<dbReference type="Gene3D" id="1.10.287.110">
    <property type="entry name" value="DnaJ domain"/>
    <property type="match status" value="1"/>
</dbReference>
<dbReference type="Gene3D" id="1.20.120.1860">
    <property type="entry name" value="Small t-antigen, unique domain"/>
    <property type="match status" value="1"/>
</dbReference>
<dbReference type="InterPro" id="IPR001623">
    <property type="entry name" value="DnaJ_domain"/>
</dbReference>
<dbReference type="InterPro" id="IPR036869">
    <property type="entry name" value="J_dom_sf"/>
</dbReference>
<dbReference type="InterPro" id="IPR003354">
    <property type="entry name" value="Papo_T_antigen"/>
</dbReference>
<dbReference type="InterPro" id="IPR036092">
    <property type="entry name" value="Papo_T_antigensf"/>
</dbReference>
<dbReference type="Pfam" id="PF02380">
    <property type="entry name" value="Papo_T_antigen"/>
    <property type="match status" value="1"/>
</dbReference>
<dbReference type="SMART" id="SM00271">
    <property type="entry name" value="DnaJ"/>
    <property type="match status" value="1"/>
</dbReference>
<dbReference type="SUPFAM" id="SSF46565">
    <property type="entry name" value="Chaperone J-domain"/>
    <property type="match status" value="1"/>
</dbReference>
<dbReference type="SUPFAM" id="SSF161240">
    <property type="entry name" value="T-antigen specific domain-like"/>
    <property type="match status" value="1"/>
</dbReference>
<comment type="function">
    <text evidence="1">Promotes efficient viral genome replication by accelerating both G1 and S phase progression of the cell cycle. Inhibits host PP2A by binding to the A subunit, thereby displacing lower affinity regulatory B subunit. Inactivation of PP2A in turn results in the transactivation of cyclin A and cyclin D1 promoters. Late during the infection cycle, ST may induce dephosphorylation of host MTOR, leading to the inhibition of cap-dependent translation. May establish and maintain high levels of viral genomes during persistent infection in cell culture.</text>
</comment>
<comment type="subunit">
    <text evidence="1">Interacts with host PPP2R1A; the interaction inhibits PP2A activity.</text>
</comment>
<comment type="subcellular location">
    <subcellularLocation>
        <location>Host cytoplasm</location>
    </subcellularLocation>
    <subcellularLocation>
        <location evidence="1">Host nucleus</location>
    </subcellularLocation>
</comment>
<comment type="alternative products">
    <event type="alternative splicing"/>
    <isoform>
        <id>P0DOJ0-1</id>
        <id>A3R4N5-1</id>
        <name>Small t antigen</name>
        <sequence type="displayed"/>
    </isoform>
    <isoform>
        <id>P0DOI7-1</id>
        <id>A3R4N4-1</id>
        <name>Large T antigen</name>
        <sequence type="external"/>
    </isoform>
</comment>
<comment type="domain">
    <text evidence="1">The common region of ST and LT proteins comprises the J domain. This domain is essential for multiple viral activities, including virion assembly, viral DNA replication, transformation and transcriptional activation. This domain is also required for cyclin A-transactivating activity of ST.</text>
</comment>
<organismHost>
    <name type="scientific">Homo sapiens</name>
    <name type="common">Human</name>
    <dbReference type="NCBI Taxonomy" id="9606"/>
</organismHost>
<accession>P0DOJ0</accession>
<accession>A3R4N0</accession>
<accession>A3R4N5</accession>
<accession>A3R4P0</accession>